<keyword id="KW-0066">ATP synthesis</keyword>
<keyword id="KW-1003">Cell membrane</keyword>
<keyword id="KW-0138">CF(0)</keyword>
<keyword id="KW-0375">Hydrogen ion transport</keyword>
<keyword id="KW-0406">Ion transport</keyword>
<keyword id="KW-0472">Membrane</keyword>
<keyword id="KW-1185">Reference proteome</keyword>
<keyword id="KW-0812">Transmembrane</keyword>
<keyword id="KW-1133">Transmembrane helix</keyword>
<keyword id="KW-0813">Transport</keyword>
<accession>Q8D3J9</accession>
<comment type="function">
    <text evidence="1">Key component of the proton channel; it plays a direct role in the translocation of protons across the membrane.</text>
</comment>
<comment type="subunit">
    <text evidence="1">F-type ATPases have 2 components, CF(1) - the catalytic core - and CF(0) - the membrane proton channel. CF(1) has five subunits: alpha(3), beta(3), gamma(1), delta(1), epsilon(1). CF(0) has three main subunits: a(1), b(2) and c(9-12). The alpha and beta chains form an alternating ring which encloses part of the gamma chain. CF(1) is attached to CF(0) by a central stalk formed by the gamma and epsilon chains, while a peripheral stalk is formed by the delta and b chains.</text>
</comment>
<comment type="subcellular location">
    <subcellularLocation>
        <location evidence="1">Cell membrane</location>
        <topology evidence="1">Multi-pass membrane protein</topology>
    </subcellularLocation>
</comment>
<comment type="similarity">
    <text evidence="1">Belongs to the ATPase A chain family.</text>
</comment>
<dbReference type="EMBL" id="BA000021">
    <property type="protein sequence ID" value="BAC24148.1"/>
    <property type="molecule type" value="Genomic_DNA"/>
</dbReference>
<dbReference type="SMR" id="Q8D3J9"/>
<dbReference type="STRING" id="36870.gene:10368480"/>
<dbReference type="KEGG" id="wbr:atpB"/>
<dbReference type="eggNOG" id="COG0356">
    <property type="taxonomic scope" value="Bacteria"/>
</dbReference>
<dbReference type="HOGENOM" id="CLU_041018_1_0_6"/>
<dbReference type="OrthoDB" id="9789241at2"/>
<dbReference type="Proteomes" id="UP000000562">
    <property type="component" value="Chromosome"/>
</dbReference>
<dbReference type="GO" id="GO:0005886">
    <property type="term" value="C:plasma membrane"/>
    <property type="evidence" value="ECO:0007669"/>
    <property type="project" value="UniProtKB-SubCell"/>
</dbReference>
<dbReference type="GO" id="GO:0045259">
    <property type="term" value="C:proton-transporting ATP synthase complex"/>
    <property type="evidence" value="ECO:0007669"/>
    <property type="project" value="UniProtKB-KW"/>
</dbReference>
<dbReference type="GO" id="GO:0046933">
    <property type="term" value="F:proton-transporting ATP synthase activity, rotational mechanism"/>
    <property type="evidence" value="ECO:0007669"/>
    <property type="project" value="UniProtKB-UniRule"/>
</dbReference>
<dbReference type="GO" id="GO:0042777">
    <property type="term" value="P:proton motive force-driven plasma membrane ATP synthesis"/>
    <property type="evidence" value="ECO:0007669"/>
    <property type="project" value="TreeGrafter"/>
</dbReference>
<dbReference type="CDD" id="cd00310">
    <property type="entry name" value="ATP-synt_Fo_a_6"/>
    <property type="match status" value="1"/>
</dbReference>
<dbReference type="FunFam" id="1.20.120.220:FF:000002">
    <property type="entry name" value="ATP synthase subunit a"/>
    <property type="match status" value="1"/>
</dbReference>
<dbReference type="Gene3D" id="1.20.120.220">
    <property type="entry name" value="ATP synthase, F0 complex, subunit A"/>
    <property type="match status" value="1"/>
</dbReference>
<dbReference type="HAMAP" id="MF_01393">
    <property type="entry name" value="ATP_synth_a_bact"/>
    <property type="match status" value="1"/>
</dbReference>
<dbReference type="InterPro" id="IPR045082">
    <property type="entry name" value="ATP_syn_F0_a_bact/chloroplast"/>
</dbReference>
<dbReference type="InterPro" id="IPR000568">
    <property type="entry name" value="ATP_synth_F0_asu"/>
</dbReference>
<dbReference type="InterPro" id="IPR023011">
    <property type="entry name" value="ATP_synth_F0_asu_AS"/>
</dbReference>
<dbReference type="InterPro" id="IPR035908">
    <property type="entry name" value="F0_ATP_A_sf"/>
</dbReference>
<dbReference type="NCBIfam" id="TIGR01131">
    <property type="entry name" value="ATP_synt_6_or_A"/>
    <property type="match status" value="1"/>
</dbReference>
<dbReference type="NCBIfam" id="NF004477">
    <property type="entry name" value="PRK05815.1-1"/>
    <property type="match status" value="1"/>
</dbReference>
<dbReference type="PANTHER" id="PTHR42823">
    <property type="entry name" value="ATP SYNTHASE SUBUNIT A, CHLOROPLASTIC"/>
    <property type="match status" value="1"/>
</dbReference>
<dbReference type="PANTHER" id="PTHR42823:SF3">
    <property type="entry name" value="ATP SYNTHASE SUBUNIT A, CHLOROPLASTIC"/>
    <property type="match status" value="1"/>
</dbReference>
<dbReference type="Pfam" id="PF00119">
    <property type="entry name" value="ATP-synt_A"/>
    <property type="match status" value="1"/>
</dbReference>
<dbReference type="PRINTS" id="PR00123">
    <property type="entry name" value="ATPASEA"/>
</dbReference>
<dbReference type="SUPFAM" id="SSF81336">
    <property type="entry name" value="F1F0 ATP synthase subunit A"/>
    <property type="match status" value="1"/>
</dbReference>
<dbReference type="PROSITE" id="PS00449">
    <property type="entry name" value="ATPASE_A"/>
    <property type="match status" value="1"/>
</dbReference>
<reference key="1">
    <citation type="journal article" date="2002" name="Nat. Genet.">
        <title>Genome sequence of the endocellular obligate symbiont of tsetse flies, Wigglesworthia glossinidia.</title>
        <authorList>
            <person name="Akman L."/>
            <person name="Yamashita A."/>
            <person name="Watanabe H."/>
            <person name="Oshima K."/>
            <person name="Shiba T."/>
            <person name="Hattori M."/>
            <person name="Aksoy S."/>
        </authorList>
    </citation>
    <scope>NUCLEOTIDE SEQUENCE [LARGE SCALE GENOMIC DNA]</scope>
</reference>
<protein>
    <recommendedName>
        <fullName evidence="1">ATP synthase subunit a</fullName>
    </recommendedName>
    <alternativeName>
        <fullName evidence="1">ATP synthase F0 sector subunit a</fullName>
    </alternativeName>
    <alternativeName>
        <fullName evidence="1">F-ATPase subunit 6</fullName>
    </alternativeName>
</protein>
<name>ATP6_WIGBR</name>
<evidence type="ECO:0000255" key="1">
    <source>
        <dbReference type="HAMAP-Rule" id="MF_01393"/>
    </source>
</evidence>
<proteinExistence type="inferred from homology"/>
<gene>
    <name evidence="1" type="primary">atpB</name>
    <name type="ordered locus">WIGBR0020</name>
</gene>
<feature type="chain" id="PRO_0000362506" description="ATP synthase subunit a">
    <location>
        <begin position="1"/>
        <end position="278"/>
    </location>
</feature>
<feature type="transmembrane region" description="Helical" evidence="1">
    <location>
        <begin position="41"/>
        <end position="61"/>
    </location>
</feature>
<feature type="transmembrane region" description="Helical" evidence="1">
    <location>
        <begin position="108"/>
        <end position="128"/>
    </location>
</feature>
<feature type="transmembrane region" description="Helical" evidence="1">
    <location>
        <begin position="149"/>
        <end position="168"/>
    </location>
</feature>
<feature type="transmembrane region" description="Helical" evidence="1">
    <location>
        <begin position="180"/>
        <end position="200"/>
    </location>
</feature>
<feature type="transmembrane region" description="Helical" evidence="1">
    <location>
        <begin position="222"/>
        <end position="242"/>
    </location>
</feature>
<feature type="transmembrane region" description="Helical" evidence="1">
    <location>
        <begin position="244"/>
        <end position="264"/>
    </location>
</feature>
<sequence length="278" mass="32300">MTIYNQSLSSKEYISHHLKNLQIDLRTFKIVQENDSSSFWFLNIDSLFFSFFLGIIFLLFFNYISKKFTIGTPGRIQASIEILVEFINSNVKDIFGHNTNKIIPPLSLTIFVWLFLMNLMDLIPVDFVPYIANFIFNISELRIVPSSDINITLSMSLGVFLLILYFGIKNKGIVVFLKEFFFQPFNNYLLIPVNLVLELISLLSKPVSLSLRLFGNIYSGELIFILISGLLPWWLQWILSVPWAIFHILIIILQAFIFMILTIIYLEMSLEKPDKNTI</sequence>
<organism>
    <name type="scientific">Wigglesworthia glossinidia brevipalpis</name>
    <dbReference type="NCBI Taxonomy" id="36870"/>
    <lineage>
        <taxon>Bacteria</taxon>
        <taxon>Pseudomonadati</taxon>
        <taxon>Pseudomonadota</taxon>
        <taxon>Gammaproteobacteria</taxon>
        <taxon>Enterobacterales</taxon>
        <taxon>Erwiniaceae</taxon>
        <taxon>Wigglesworthia</taxon>
    </lineage>
</organism>